<feature type="chain" id="PRO_0000377563" description="Bifunctional helicase and thymine dioxygenase JBP2">
    <location>
        <begin position="1"/>
        <end position="1086"/>
    </location>
</feature>
<feature type="domain" description="Helicase ATP-binding" evidence="3">
    <location>
        <begin position="533"/>
        <end position="708"/>
    </location>
</feature>
<feature type="domain" description="Helicase C-terminal" evidence="4">
    <location>
        <begin position="883"/>
        <end position="1041"/>
    </location>
</feature>
<feature type="region of interest" description="Thymine dioxygenase">
    <location>
        <begin position="1"/>
        <end position="518"/>
    </location>
</feature>
<feature type="region of interest" description="Disordered" evidence="5">
    <location>
        <begin position="187"/>
        <end position="220"/>
    </location>
</feature>
<feature type="region of interest" description="DNA Helicase">
    <location>
        <begin position="519"/>
        <end position="1084"/>
    </location>
</feature>
<feature type="short sequence motif" description="DEAH box">
    <location>
        <begin position="659"/>
        <end position="662"/>
    </location>
</feature>
<feature type="binding site" evidence="2">
    <location>
        <position position="393"/>
    </location>
    <ligand>
        <name>Fe cation</name>
        <dbReference type="ChEBI" id="CHEBI:24875"/>
        <note>catalytic; for thymine dioxygenase activity</note>
    </ligand>
</feature>
<feature type="binding site" evidence="2">
    <location>
        <position position="395"/>
    </location>
    <ligand>
        <name>Fe cation</name>
        <dbReference type="ChEBI" id="CHEBI:24875"/>
        <note>catalytic; for thymine dioxygenase activity</note>
    </ligand>
</feature>
<feature type="binding site" evidence="2">
    <location>
        <position position="443"/>
    </location>
    <ligand>
        <name>Fe cation</name>
        <dbReference type="ChEBI" id="CHEBI:24875"/>
        <note>catalytic; for thymine dioxygenase activity</note>
    </ligand>
</feature>
<feature type="binding site" evidence="2">
    <location>
        <position position="457"/>
    </location>
    <ligand>
        <name>2-oxoglutarate</name>
        <dbReference type="ChEBI" id="CHEBI:16810"/>
    </ligand>
</feature>
<feature type="binding site" evidence="3">
    <location>
        <begin position="546"/>
        <end position="553"/>
    </location>
    <ligand>
        <name>ATP</name>
        <dbReference type="ChEBI" id="CHEBI:30616"/>
    </ligand>
</feature>
<organism>
    <name type="scientific">Trypanosoma cruzi (strain CL Brener)</name>
    <dbReference type="NCBI Taxonomy" id="353153"/>
    <lineage>
        <taxon>Eukaryota</taxon>
        <taxon>Discoba</taxon>
        <taxon>Euglenozoa</taxon>
        <taxon>Kinetoplastea</taxon>
        <taxon>Metakinetoplastina</taxon>
        <taxon>Trypanosomatida</taxon>
        <taxon>Trypanosomatidae</taxon>
        <taxon>Trypanosoma</taxon>
        <taxon>Schizotrypanum</taxon>
    </lineage>
</organism>
<sequence>MPVPSHVSVATLQSVLQTVCSTGEPAIIAPSSFLGELDTVVDEVKRHGMKLASIPHGGITILPPVPISGTELFDFCAEYCKAQTHEERLAVRHKINNHNFLMQDPLLRMPCRQLYNPADYVLRIVHLCSELVSASEEEYHGAYGVAPLLHINPVQDVCGKLRSMFQSGSLYVKPWILEEEEERREMDESNRGVLFNSDSFGNGRGGSSISSSERSVDENDVADEDLTGEEVVDNATDTVVEYLSEKDFDVVTESGIFYDDSGERVHAIYLRGGIKKELCQRAAIAIEEAATTKNLRKAVNGGKTNPETGIVGYYDYLNNPTQRKCRETEFTRKNWSSVVDSCEPFLVALNKLYSECAPTHYKLQRIAIPHHYQLFNTVFSTMTVNRNFRTAVHTDRGDFRSGLAALCVIDGVFEGCHLAIKKLGKAFRLETGDVLFFDTSLEHGNTEVHNFDYCWKRVSVVCYLRNGLMSQICEMERRRWLQKQMLKQRLLDRSRQSVINLNATDPNLPPIYLPGRLLEVLSPVQQAALGFVVDRLSKGNGCVIALTMGLGKTLLSLALCYSHMYDQNPRDVLILAPKIVLTHWTGEKQKWEKYGLVFSHFVVSDGTDSVSFEIALKRYKQQLNGELPRTSHVFVINPEYIRTVLKKLTGFRPSLIIVDEGHRVSSKGSKLKDWLEGLRCTARVILSGTPVQNNAEELYRLIGWINSDVHSVLPPRVFTDLAGTINRYINGDDSALAAAVSAQRYIQEWMCSYVFSVMKTDLPPLNDYIIICGFSSIQRKMLEDHFGMEGIDGLTSIKASEHRPYHLSTHPLCFLGFISGVYKSLNGNHKLTPEAEEELESQEYASQLYSLTEDDIGLIDECLSLVNSGFLTEFVGLSGKMTVLISILHSIREKKEKAIIFSQYVGSQDFISRTLTSFDIVSSTIRGRDCHERRRRTIEKFREDEKITCLLLSTQIGAYGLDFTAANHVILWDSWWNPQVESQAIARAYRRNQTRAVIVYRLASEFEDTIVLKTQIRKLALFRCIMNEEASRAVPPEELLDCVDTEEDEGRRFLWRSLKKSYLEGGAPAVSKVFRHGDTVRSESWS</sequence>
<protein>
    <recommendedName>
        <fullName>Bifunctional helicase and thymine dioxygenase JBP2</fullName>
    </recommendedName>
    <alternativeName>
        <fullName>J-binding protein 2</fullName>
    </alternativeName>
    <domain>
        <recommendedName>
            <fullName>Probable DNA helicase JBP2</fullName>
            <ecNumber evidence="1">3.6.4.12</ecNumber>
        </recommendedName>
    </domain>
    <domain>
        <recommendedName>
            <fullName>Thymine dioxygenase JBP2</fullName>
            <ecNumber evidence="1">1.14.11.6</ecNumber>
        </recommendedName>
    </domain>
</protein>
<gene>
    <name type="primary">JBP2</name>
    <name type="ORF">Tc00.1047053508859.74</name>
</gene>
<name>JBP2_TRYCC</name>
<evidence type="ECO:0000250" key="1">
    <source>
        <dbReference type="UniProtKB" id="Q57X81"/>
    </source>
</evidence>
<evidence type="ECO:0000250" key="2">
    <source>
        <dbReference type="UniProtKB" id="Q6N021"/>
    </source>
</evidence>
<evidence type="ECO:0000255" key="3">
    <source>
        <dbReference type="PROSITE-ProRule" id="PRU00541"/>
    </source>
</evidence>
<evidence type="ECO:0000255" key="4">
    <source>
        <dbReference type="PROSITE-ProRule" id="PRU00542"/>
    </source>
</evidence>
<evidence type="ECO:0000256" key="5">
    <source>
        <dbReference type="SAM" id="MobiDB-lite"/>
    </source>
</evidence>
<evidence type="ECO:0000305" key="6"/>
<keyword id="KW-0067">ATP-binding</keyword>
<keyword id="KW-0223">Dioxygenase</keyword>
<keyword id="KW-0238">DNA-binding</keyword>
<keyword id="KW-0347">Helicase</keyword>
<keyword id="KW-0378">Hydrolase</keyword>
<keyword id="KW-0408">Iron</keyword>
<keyword id="KW-0479">Metal-binding</keyword>
<keyword id="KW-0547">Nucleotide-binding</keyword>
<keyword id="KW-0539">Nucleus</keyword>
<keyword id="KW-0560">Oxidoreductase</keyword>
<keyword id="KW-1185">Reference proteome</keyword>
<accession>Q4DCH3</accession>
<proteinExistence type="inferred from homology"/>
<reference key="1">
    <citation type="journal article" date="2005" name="Science">
        <title>The genome sequence of Trypanosoma cruzi, etiologic agent of Chagas disease.</title>
        <authorList>
            <person name="El-Sayed N.M.A."/>
            <person name="Myler P.J."/>
            <person name="Bartholomeu D.C."/>
            <person name="Nilsson D."/>
            <person name="Aggarwal G."/>
            <person name="Tran A.-N."/>
            <person name="Ghedin E."/>
            <person name="Worthey E.A."/>
            <person name="Delcher A.L."/>
            <person name="Blandin G."/>
            <person name="Westenberger S.J."/>
            <person name="Caler E."/>
            <person name="Cerqueira G.C."/>
            <person name="Branche C."/>
            <person name="Haas B."/>
            <person name="Anupama A."/>
            <person name="Arner E."/>
            <person name="Aslund L."/>
            <person name="Attipoe P."/>
            <person name="Bontempi E."/>
            <person name="Bringaud F."/>
            <person name="Burton P."/>
            <person name="Cadag E."/>
            <person name="Campbell D.A."/>
            <person name="Carrington M."/>
            <person name="Crabtree J."/>
            <person name="Darban H."/>
            <person name="da Silveira J.F."/>
            <person name="de Jong P."/>
            <person name="Edwards K."/>
            <person name="Englund P.T."/>
            <person name="Fazelina G."/>
            <person name="Feldblyum T."/>
            <person name="Ferella M."/>
            <person name="Frasch A.C."/>
            <person name="Gull K."/>
            <person name="Horn D."/>
            <person name="Hou L."/>
            <person name="Huang Y."/>
            <person name="Kindlund E."/>
            <person name="Klingbeil M."/>
            <person name="Kluge S."/>
            <person name="Koo H."/>
            <person name="Lacerda D."/>
            <person name="Levin M.J."/>
            <person name="Lorenzi H."/>
            <person name="Louie T."/>
            <person name="Machado C.R."/>
            <person name="McCulloch R."/>
            <person name="McKenna A."/>
            <person name="Mizuno Y."/>
            <person name="Mottram J.C."/>
            <person name="Nelson S."/>
            <person name="Ochaya S."/>
            <person name="Osoegawa K."/>
            <person name="Pai G."/>
            <person name="Parsons M."/>
            <person name="Pentony M."/>
            <person name="Pettersson U."/>
            <person name="Pop M."/>
            <person name="Ramirez J.L."/>
            <person name="Rinta J."/>
            <person name="Robertson L."/>
            <person name="Salzberg S.L."/>
            <person name="Sanchez D.O."/>
            <person name="Seyler A."/>
            <person name="Sharma R."/>
            <person name="Shetty J."/>
            <person name="Simpson A.J."/>
            <person name="Sisk E."/>
            <person name="Tammi M.T."/>
            <person name="Tarleton R."/>
            <person name="Teixeira S."/>
            <person name="Van Aken S."/>
            <person name="Vogt C."/>
            <person name="Ward P.N."/>
            <person name="Wickstead B."/>
            <person name="Wortman J."/>
            <person name="White O."/>
            <person name="Fraser C.M."/>
            <person name="Stuart K.D."/>
            <person name="Andersson B."/>
        </authorList>
    </citation>
    <scope>NUCLEOTIDE SEQUENCE [LARGE SCALE GENOMIC DNA]</scope>
    <source>
        <strain>CL Brener</strain>
    </source>
</reference>
<dbReference type="EC" id="3.6.4.12" evidence="1"/>
<dbReference type="EC" id="1.14.11.6" evidence="1"/>
<dbReference type="EMBL" id="AAHK01000656">
    <property type="protein sequence ID" value="EAN90229.1"/>
    <property type="molecule type" value="Genomic_DNA"/>
</dbReference>
<dbReference type="RefSeq" id="XP_812080.1">
    <property type="nucleotide sequence ID" value="XM_806987.1"/>
</dbReference>
<dbReference type="SMR" id="Q4DCH3"/>
<dbReference type="STRING" id="353153.Q4DCH3"/>
<dbReference type="PaxDb" id="353153-Q4DCH3"/>
<dbReference type="EnsemblProtists" id="EAN90229">
    <property type="protein sequence ID" value="EAN90229"/>
    <property type="gene ID" value="Tc00.1047053508859.74"/>
</dbReference>
<dbReference type="GeneID" id="3543167"/>
<dbReference type="KEGG" id="tcr:508859.74"/>
<dbReference type="eggNOG" id="KOG0390">
    <property type="taxonomic scope" value="Eukaryota"/>
</dbReference>
<dbReference type="InParanoid" id="Q4DCH3"/>
<dbReference type="OMA" id="HKCRETE"/>
<dbReference type="Proteomes" id="UP000002296">
    <property type="component" value="Unassembled WGS sequence"/>
</dbReference>
<dbReference type="GO" id="GO:0005634">
    <property type="term" value="C:nucleus"/>
    <property type="evidence" value="ECO:0007669"/>
    <property type="project" value="UniProtKB-SubCell"/>
</dbReference>
<dbReference type="GO" id="GO:0005524">
    <property type="term" value="F:ATP binding"/>
    <property type="evidence" value="ECO:0007669"/>
    <property type="project" value="UniProtKB-KW"/>
</dbReference>
<dbReference type="GO" id="GO:0016887">
    <property type="term" value="F:ATP hydrolysis activity"/>
    <property type="evidence" value="ECO:0007669"/>
    <property type="project" value="RHEA"/>
</dbReference>
<dbReference type="GO" id="GO:0003677">
    <property type="term" value="F:DNA binding"/>
    <property type="evidence" value="ECO:0007669"/>
    <property type="project" value="UniProtKB-KW"/>
</dbReference>
<dbReference type="GO" id="GO:0015616">
    <property type="term" value="F:DNA translocase activity"/>
    <property type="evidence" value="ECO:0007669"/>
    <property type="project" value="TreeGrafter"/>
</dbReference>
<dbReference type="GO" id="GO:0004386">
    <property type="term" value="F:helicase activity"/>
    <property type="evidence" value="ECO:0007669"/>
    <property type="project" value="UniProtKB-KW"/>
</dbReference>
<dbReference type="GO" id="GO:0046872">
    <property type="term" value="F:metal ion binding"/>
    <property type="evidence" value="ECO:0007669"/>
    <property type="project" value="UniProtKB-KW"/>
</dbReference>
<dbReference type="GO" id="GO:0050341">
    <property type="term" value="F:thymine dioxygenase activity"/>
    <property type="evidence" value="ECO:0007669"/>
    <property type="project" value="UniProtKB-EC"/>
</dbReference>
<dbReference type="GO" id="GO:0070580">
    <property type="term" value="P:base J metabolic process"/>
    <property type="evidence" value="ECO:0007669"/>
    <property type="project" value="UniProtKB-ARBA"/>
</dbReference>
<dbReference type="GO" id="GO:0000724">
    <property type="term" value="P:double-strand break repair via homologous recombination"/>
    <property type="evidence" value="ECO:0007669"/>
    <property type="project" value="TreeGrafter"/>
</dbReference>
<dbReference type="GO" id="GO:0007131">
    <property type="term" value="P:reciprocal meiotic recombination"/>
    <property type="evidence" value="ECO:0007669"/>
    <property type="project" value="TreeGrafter"/>
</dbReference>
<dbReference type="CDD" id="cd17919">
    <property type="entry name" value="DEXHc_Snf"/>
    <property type="match status" value="1"/>
</dbReference>
<dbReference type="CDD" id="cd18793">
    <property type="entry name" value="SF2_C_SNF"/>
    <property type="match status" value="1"/>
</dbReference>
<dbReference type="FunFam" id="3.40.50.10810:FF:000072">
    <property type="entry name" value="Bifunctional helicase and thymine dioxygenase JBP2"/>
    <property type="match status" value="1"/>
</dbReference>
<dbReference type="Gene3D" id="3.60.130.30">
    <property type="match status" value="1"/>
</dbReference>
<dbReference type="Gene3D" id="3.40.50.300">
    <property type="entry name" value="P-loop containing nucleotide triphosphate hydrolases"/>
    <property type="match status" value="1"/>
</dbReference>
<dbReference type="Gene3D" id="3.40.50.10810">
    <property type="entry name" value="Tandem AAA-ATPase domain"/>
    <property type="match status" value="1"/>
</dbReference>
<dbReference type="InterPro" id="IPR024779">
    <property type="entry name" value="2OGFeDO_JBP1/TET_oxygenase_dom"/>
</dbReference>
<dbReference type="InterPro" id="IPR014001">
    <property type="entry name" value="Helicase_ATP-bd"/>
</dbReference>
<dbReference type="InterPro" id="IPR001650">
    <property type="entry name" value="Helicase_C-like"/>
</dbReference>
<dbReference type="InterPro" id="IPR027417">
    <property type="entry name" value="P-loop_NTPase"/>
</dbReference>
<dbReference type="InterPro" id="IPR038718">
    <property type="entry name" value="SNF2-like_sf"/>
</dbReference>
<dbReference type="InterPro" id="IPR049730">
    <property type="entry name" value="SNF2/RAD54-like_C"/>
</dbReference>
<dbReference type="InterPro" id="IPR000330">
    <property type="entry name" value="SNF2_N"/>
</dbReference>
<dbReference type="InterPro" id="IPR050496">
    <property type="entry name" value="SNF2_RAD54_helicase_repair"/>
</dbReference>
<dbReference type="PANTHER" id="PTHR45629:SF7">
    <property type="entry name" value="DNA EXCISION REPAIR PROTEIN ERCC-6-RELATED"/>
    <property type="match status" value="1"/>
</dbReference>
<dbReference type="PANTHER" id="PTHR45629">
    <property type="entry name" value="SNF2/RAD54 FAMILY MEMBER"/>
    <property type="match status" value="1"/>
</dbReference>
<dbReference type="Pfam" id="PF00271">
    <property type="entry name" value="Helicase_C"/>
    <property type="match status" value="1"/>
</dbReference>
<dbReference type="Pfam" id="PF00176">
    <property type="entry name" value="SNF2-rel_dom"/>
    <property type="match status" value="1"/>
</dbReference>
<dbReference type="Pfam" id="PF12851">
    <property type="entry name" value="Tet_JBP"/>
    <property type="match status" value="1"/>
</dbReference>
<dbReference type="SMART" id="SM00487">
    <property type="entry name" value="DEXDc"/>
    <property type="match status" value="1"/>
</dbReference>
<dbReference type="SMART" id="SM00490">
    <property type="entry name" value="HELICc"/>
    <property type="match status" value="1"/>
</dbReference>
<dbReference type="SUPFAM" id="SSF52540">
    <property type="entry name" value="P-loop containing nucleoside triphosphate hydrolases"/>
    <property type="match status" value="2"/>
</dbReference>
<dbReference type="PROSITE" id="PS51192">
    <property type="entry name" value="HELICASE_ATP_BIND_1"/>
    <property type="match status" value="1"/>
</dbReference>
<dbReference type="PROSITE" id="PS51194">
    <property type="entry name" value="HELICASE_CTER"/>
    <property type="match status" value="1"/>
</dbReference>
<comment type="function">
    <text evidence="1">Dioxygenase that catalyzes the first step of DNA base J (beta-d-glucosyl-HOMedU) biosynthesis by converting thymine to 5-hydroxymethyluracil (HOMedU). DNA base J is a hypermodified thymidine residue found in the genome of kinetoplastid parasites, which is localized primarily to repetitive DNA, namely the telomeres, and is implicated in the regulation of antigenic variation. Probably also acts as a DNA helicase. Recognizes and binds specific regions of the genome, hydrolyzes ATP and allows the DNA base J de novo synthesis. Involved in initial synthesis of DNA base J, JBP1 being able to act via the basal level of DNA base J and propagate further synthesis. In contrast to JBP1, it does not specifically bind DNA base J, however it binds chromatin (By similarity).</text>
</comment>
<comment type="catalytic activity">
    <reaction evidence="1">
        <text>ATP + H2O = ADP + phosphate + H(+)</text>
        <dbReference type="Rhea" id="RHEA:13065"/>
        <dbReference type="ChEBI" id="CHEBI:15377"/>
        <dbReference type="ChEBI" id="CHEBI:15378"/>
        <dbReference type="ChEBI" id="CHEBI:30616"/>
        <dbReference type="ChEBI" id="CHEBI:43474"/>
        <dbReference type="ChEBI" id="CHEBI:456216"/>
        <dbReference type="EC" id="3.6.4.12"/>
    </reaction>
</comment>
<comment type="catalytic activity">
    <reaction evidence="1">
        <text>thymine + 2-oxoglutarate + O2 = 5-hydroxymethyluracil + succinate + CO2</text>
        <dbReference type="Rhea" id="RHEA:10316"/>
        <dbReference type="ChEBI" id="CHEBI:15379"/>
        <dbReference type="ChEBI" id="CHEBI:16526"/>
        <dbReference type="ChEBI" id="CHEBI:16810"/>
        <dbReference type="ChEBI" id="CHEBI:16964"/>
        <dbReference type="ChEBI" id="CHEBI:17821"/>
        <dbReference type="ChEBI" id="CHEBI:30031"/>
        <dbReference type="EC" id="1.14.11.6"/>
    </reaction>
</comment>
<comment type="cofactor">
    <cofactor evidence="2">
        <name>Fe(2+)</name>
        <dbReference type="ChEBI" id="CHEBI:29033"/>
    </cofactor>
    <text evidence="2">Binds 1 Fe(2+) ion per subunit.</text>
</comment>
<comment type="subcellular location">
    <subcellularLocation>
        <location evidence="1">Nucleus</location>
    </subcellularLocation>
</comment>
<comment type="similarity">
    <text evidence="6">In the C-terminal section; belongs to the SNF2/RAD54 helicase family.</text>
</comment>
<comment type="similarity">
    <text evidence="6">In the N-terminal section; belongs to the TET family. JBP2 subfamily.</text>
</comment>